<proteinExistence type="inferred from homology"/>
<protein>
    <recommendedName>
        <fullName evidence="1">Small ribosomal subunit protein uS8</fullName>
    </recommendedName>
    <alternativeName>
        <fullName evidence="2">30S ribosomal protein S8</fullName>
    </alternativeName>
</protein>
<gene>
    <name evidence="1" type="primary">rpsH</name>
    <name type="ordered locus">lpg0343</name>
</gene>
<evidence type="ECO:0000255" key="1">
    <source>
        <dbReference type="HAMAP-Rule" id="MF_01302"/>
    </source>
</evidence>
<evidence type="ECO:0000305" key="2"/>
<comment type="function">
    <text evidence="1">One of the primary rRNA binding proteins, it binds directly to 16S rRNA central domain where it helps coordinate assembly of the platform of the 30S subunit.</text>
</comment>
<comment type="subunit">
    <text evidence="1">Part of the 30S ribosomal subunit. Contacts proteins S5 and S12.</text>
</comment>
<comment type="similarity">
    <text evidence="1">Belongs to the universal ribosomal protein uS8 family.</text>
</comment>
<comment type="sequence caution" evidence="2">
    <conflict type="erroneous initiation">
        <sequence resource="EMBL-CDS" id="AAU26440"/>
    </conflict>
</comment>
<organism>
    <name type="scientific">Legionella pneumophila subsp. pneumophila (strain Philadelphia 1 / ATCC 33152 / DSM 7513)</name>
    <dbReference type="NCBI Taxonomy" id="272624"/>
    <lineage>
        <taxon>Bacteria</taxon>
        <taxon>Pseudomonadati</taxon>
        <taxon>Pseudomonadota</taxon>
        <taxon>Gammaproteobacteria</taxon>
        <taxon>Legionellales</taxon>
        <taxon>Legionellaceae</taxon>
        <taxon>Legionella</taxon>
    </lineage>
</organism>
<name>RS8_LEGPH</name>
<reference key="1">
    <citation type="journal article" date="2004" name="Science">
        <title>The genomic sequence of the accidental pathogen Legionella pneumophila.</title>
        <authorList>
            <person name="Chien M."/>
            <person name="Morozova I."/>
            <person name="Shi S."/>
            <person name="Sheng H."/>
            <person name="Chen J."/>
            <person name="Gomez S.M."/>
            <person name="Asamani G."/>
            <person name="Hill K."/>
            <person name="Nuara J."/>
            <person name="Feder M."/>
            <person name="Rineer J."/>
            <person name="Greenberg J.J."/>
            <person name="Steshenko V."/>
            <person name="Park S.H."/>
            <person name="Zhao B."/>
            <person name="Teplitskaya E."/>
            <person name="Edwards J.R."/>
            <person name="Pampou S."/>
            <person name="Georghiou A."/>
            <person name="Chou I.-C."/>
            <person name="Iannuccilli W."/>
            <person name="Ulz M.E."/>
            <person name="Kim D.H."/>
            <person name="Geringer-Sameth A."/>
            <person name="Goldsberry C."/>
            <person name="Morozov P."/>
            <person name="Fischer S.G."/>
            <person name="Segal G."/>
            <person name="Qu X."/>
            <person name="Rzhetsky A."/>
            <person name="Zhang P."/>
            <person name="Cayanis E."/>
            <person name="De Jong P.J."/>
            <person name="Ju J."/>
            <person name="Kalachikov S."/>
            <person name="Shuman H.A."/>
            <person name="Russo J.J."/>
        </authorList>
    </citation>
    <scope>NUCLEOTIDE SEQUENCE [LARGE SCALE GENOMIC DNA]</scope>
    <source>
        <strain>Philadelphia 1 / ATCC 33152 / DSM 7513</strain>
    </source>
</reference>
<feature type="chain" id="PRO_0000290865" description="Small ribosomal subunit protein uS8">
    <location>
        <begin position="1"/>
        <end position="131"/>
    </location>
</feature>
<accession>Q5ZYM9</accession>
<keyword id="KW-1185">Reference proteome</keyword>
<keyword id="KW-0687">Ribonucleoprotein</keyword>
<keyword id="KW-0689">Ribosomal protein</keyword>
<keyword id="KW-0694">RNA-binding</keyword>
<keyword id="KW-0699">rRNA-binding</keyword>
<sequence length="131" mass="14681">MSMHDPIADMLTRIRNGQQAKHQQVTLVSSKLKEEIARVLKEEGYIQDFFIETLPNGLKSITLKLKYYHGRPVIEFIKRISRPGLRVYKSYKDLHSIPGFGVAILSTSKGIMTHVSAKVKGVGGEVICEVA</sequence>
<dbReference type="EMBL" id="AE017354">
    <property type="protein sequence ID" value="AAU26440.1"/>
    <property type="status" value="ALT_INIT"/>
    <property type="molecule type" value="Genomic_DNA"/>
</dbReference>
<dbReference type="RefSeq" id="YP_094387.2">
    <property type="nucleotide sequence ID" value="NC_002942.5"/>
</dbReference>
<dbReference type="SMR" id="Q5ZYM9"/>
<dbReference type="STRING" id="272624.lpg0343"/>
<dbReference type="PaxDb" id="272624-lpg0343"/>
<dbReference type="KEGG" id="lpn:lpg0343"/>
<dbReference type="eggNOG" id="COG0096">
    <property type="taxonomic scope" value="Bacteria"/>
</dbReference>
<dbReference type="HOGENOM" id="CLU_098428_0_0_6"/>
<dbReference type="OrthoDB" id="9802617at2"/>
<dbReference type="Proteomes" id="UP000000609">
    <property type="component" value="Chromosome"/>
</dbReference>
<dbReference type="GO" id="GO:1990904">
    <property type="term" value="C:ribonucleoprotein complex"/>
    <property type="evidence" value="ECO:0007669"/>
    <property type="project" value="UniProtKB-KW"/>
</dbReference>
<dbReference type="GO" id="GO:0005840">
    <property type="term" value="C:ribosome"/>
    <property type="evidence" value="ECO:0007669"/>
    <property type="project" value="UniProtKB-KW"/>
</dbReference>
<dbReference type="GO" id="GO:0019843">
    <property type="term" value="F:rRNA binding"/>
    <property type="evidence" value="ECO:0007669"/>
    <property type="project" value="UniProtKB-UniRule"/>
</dbReference>
<dbReference type="GO" id="GO:0003735">
    <property type="term" value="F:structural constituent of ribosome"/>
    <property type="evidence" value="ECO:0007669"/>
    <property type="project" value="InterPro"/>
</dbReference>
<dbReference type="GO" id="GO:0006412">
    <property type="term" value="P:translation"/>
    <property type="evidence" value="ECO:0007669"/>
    <property type="project" value="UniProtKB-UniRule"/>
</dbReference>
<dbReference type="FunFam" id="3.30.1370.30:FF:000002">
    <property type="entry name" value="30S ribosomal protein S8"/>
    <property type="match status" value="1"/>
</dbReference>
<dbReference type="FunFam" id="3.30.1490.10:FF:000001">
    <property type="entry name" value="30S ribosomal protein S8"/>
    <property type="match status" value="1"/>
</dbReference>
<dbReference type="Gene3D" id="3.30.1370.30">
    <property type="match status" value="1"/>
</dbReference>
<dbReference type="Gene3D" id="3.30.1490.10">
    <property type="match status" value="1"/>
</dbReference>
<dbReference type="HAMAP" id="MF_01302_B">
    <property type="entry name" value="Ribosomal_uS8_B"/>
    <property type="match status" value="1"/>
</dbReference>
<dbReference type="InterPro" id="IPR000630">
    <property type="entry name" value="Ribosomal_uS8"/>
</dbReference>
<dbReference type="InterPro" id="IPR047863">
    <property type="entry name" value="Ribosomal_uS8_CS"/>
</dbReference>
<dbReference type="InterPro" id="IPR035987">
    <property type="entry name" value="Ribosomal_uS8_sf"/>
</dbReference>
<dbReference type="NCBIfam" id="NF001109">
    <property type="entry name" value="PRK00136.1"/>
    <property type="match status" value="1"/>
</dbReference>
<dbReference type="PANTHER" id="PTHR11758">
    <property type="entry name" value="40S RIBOSOMAL PROTEIN S15A"/>
    <property type="match status" value="1"/>
</dbReference>
<dbReference type="Pfam" id="PF00410">
    <property type="entry name" value="Ribosomal_S8"/>
    <property type="match status" value="1"/>
</dbReference>
<dbReference type="SUPFAM" id="SSF56047">
    <property type="entry name" value="Ribosomal protein S8"/>
    <property type="match status" value="1"/>
</dbReference>
<dbReference type="PROSITE" id="PS00053">
    <property type="entry name" value="RIBOSOMAL_S8"/>
    <property type="match status" value="1"/>
</dbReference>